<gene>
    <name evidence="1" type="primary">dsdA</name>
    <name type="ordered locus">ASA_2940</name>
</gene>
<organism>
    <name type="scientific">Aeromonas salmonicida (strain A449)</name>
    <dbReference type="NCBI Taxonomy" id="382245"/>
    <lineage>
        <taxon>Bacteria</taxon>
        <taxon>Pseudomonadati</taxon>
        <taxon>Pseudomonadota</taxon>
        <taxon>Gammaproteobacteria</taxon>
        <taxon>Aeromonadales</taxon>
        <taxon>Aeromonadaceae</taxon>
        <taxon>Aeromonas</taxon>
    </lineage>
</organism>
<accession>A4SPX2</accession>
<name>SDHD_AERS4</name>
<dbReference type="EC" id="4.3.1.18" evidence="1"/>
<dbReference type="EMBL" id="CP000644">
    <property type="protein sequence ID" value="ABO90944.1"/>
    <property type="molecule type" value="Genomic_DNA"/>
</dbReference>
<dbReference type="RefSeq" id="WP_005312755.1">
    <property type="nucleotide sequence ID" value="NC_009348.1"/>
</dbReference>
<dbReference type="SMR" id="A4SPX2"/>
<dbReference type="STRING" id="29491.GCA_000820065_02294"/>
<dbReference type="KEGG" id="asa:ASA_2940"/>
<dbReference type="PATRIC" id="fig|382245.13.peg.2922"/>
<dbReference type="eggNOG" id="COG3048">
    <property type="taxonomic scope" value="Bacteria"/>
</dbReference>
<dbReference type="HOGENOM" id="CLU_035707_0_0_6"/>
<dbReference type="Proteomes" id="UP000000225">
    <property type="component" value="Chromosome"/>
</dbReference>
<dbReference type="GO" id="GO:0008721">
    <property type="term" value="F:D-serine ammonia-lyase activity"/>
    <property type="evidence" value="ECO:0007669"/>
    <property type="project" value="UniProtKB-EC"/>
</dbReference>
<dbReference type="GO" id="GO:0016836">
    <property type="term" value="F:hydro-lyase activity"/>
    <property type="evidence" value="ECO:0007669"/>
    <property type="project" value="UniProtKB-UniRule"/>
</dbReference>
<dbReference type="GO" id="GO:0030170">
    <property type="term" value="F:pyridoxal phosphate binding"/>
    <property type="evidence" value="ECO:0007669"/>
    <property type="project" value="InterPro"/>
</dbReference>
<dbReference type="GO" id="GO:0036088">
    <property type="term" value="P:D-serine catabolic process"/>
    <property type="evidence" value="ECO:0007669"/>
    <property type="project" value="TreeGrafter"/>
</dbReference>
<dbReference type="GO" id="GO:0009097">
    <property type="term" value="P:isoleucine biosynthetic process"/>
    <property type="evidence" value="ECO:0007669"/>
    <property type="project" value="TreeGrafter"/>
</dbReference>
<dbReference type="FunFam" id="3.40.50.1100:FF:000018">
    <property type="entry name" value="D-serine dehydratase"/>
    <property type="match status" value="1"/>
</dbReference>
<dbReference type="Gene3D" id="3.40.50.1100">
    <property type="match status" value="2"/>
</dbReference>
<dbReference type="HAMAP" id="MF_01030">
    <property type="entry name" value="D_Ser_dehydrat"/>
    <property type="match status" value="1"/>
</dbReference>
<dbReference type="InterPro" id="IPR011780">
    <property type="entry name" value="D_Ser_am_lyase"/>
</dbReference>
<dbReference type="InterPro" id="IPR050147">
    <property type="entry name" value="Ser/Thr_Dehydratase"/>
</dbReference>
<dbReference type="InterPro" id="IPR000634">
    <property type="entry name" value="Ser/Thr_deHydtase_PyrdxlP-BS"/>
</dbReference>
<dbReference type="InterPro" id="IPR001926">
    <property type="entry name" value="TrpB-like_PALP"/>
</dbReference>
<dbReference type="InterPro" id="IPR036052">
    <property type="entry name" value="TrpB-like_PALP_sf"/>
</dbReference>
<dbReference type="NCBIfam" id="TIGR02035">
    <property type="entry name" value="D_Ser_am_lyase"/>
    <property type="match status" value="1"/>
</dbReference>
<dbReference type="NCBIfam" id="NF002823">
    <property type="entry name" value="PRK02991.1"/>
    <property type="match status" value="1"/>
</dbReference>
<dbReference type="PANTHER" id="PTHR48078:SF9">
    <property type="entry name" value="D-SERINE DEHYDRATASE"/>
    <property type="match status" value="1"/>
</dbReference>
<dbReference type="PANTHER" id="PTHR48078">
    <property type="entry name" value="THREONINE DEHYDRATASE, MITOCHONDRIAL-RELATED"/>
    <property type="match status" value="1"/>
</dbReference>
<dbReference type="Pfam" id="PF00291">
    <property type="entry name" value="PALP"/>
    <property type="match status" value="1"/>
</dbReference>
<dbReference type="SUPFAM" id="SSF53686">
    <property type="entry name" value="Tryptophan synthase beta subunit-like PLP-dependent enzymes"/>
    <property type="match status" value="1"/>
</dbReference>
<dbReference type="PROSITE" id="PS00165">
    <property type="entry name" value="DEHYDRATASE_SER_THR"/>
    <property type="match status" value="1"/>
</dbReference>
<keyword id="KW-0456">Lyase</keyword>
<keyword id="KW-0663">Pyridoxal phosphate</keyword>
<proteinExistence type="inferred from homology"/>
<feature type="chain" id="PRO_1000063707" description="Probable D-serine dehydratase">
    <location>
        <begin position="1"/>
        <end position="443"/>
    </location>
</feature>
<feature type="modified residue" description="N6-(pyridoxal phosphate)lysine" evidence="1">
    <location>
        <position position="118"/>
    </location>
</feature>
<sequence>MKNIDVQQLTNQFPLVQSLIALEPVTWFNPKASTLAVGLPYVGLDGSDVADASARLARFAPYMCEAFPETRASKGILESEIVAIPAMQATLNTRYGVEVTGKLLLKKDSHLPISGSIKARGGIYEVLTHAEQLAIKAGLLCEEDDYRKLFSEEFRQFFGQYSIAVGSTGNLGMSIGIMSAKLGFTVTVHMSADAREWKKRKLREHGVIVVEYAEDYGVAVEQGRKEAERDPNCFFIDDENSRTLFLGYSVAGERVKTQFDQMGIKVDAEHPLFVYLPCGVGGGPGGVAFGLKLAFGDNVHCLFAEPTHSPCMLLGVHTGLHDQISVQDLGIDNLTAADGLAVGRASGFVGRAMERLLDGFYTLSDQEMYDLLGLLARDEQIKLEPSALAGMPGPWRIAADREWQTERGFDAATLARATHLVWATGGGMVPAEEMEKYLATAEI</sequence>
<comment type="catalytic activity">
    <reaction evidence="1">
        <text>D-serine = pyruvate + NH4(+)</text>
        <dbReference type="Rhea" id="RHEA:13977"/>
        <dbReference type="ChEBI" id="CHEBI:15361"/>
        <dbReference type="ChEBI" id="CHEBI:28938"/>
        <dbReference type="ChEBI" id="CHEBI:35247"/>
        <dbReference type="EC" id="4.3.1.18"/>
    </reaction>
</comment>
<comment type="cofactor">
    <cofactor evidence="1">
        <name>pyridoxal 5'-phosphate</name>
        <dbReference type="ChEBI" id="CHEBI:597326"/>
    </cofactor>
</comment>
<comment type="similarity">
    <text evidence="1">Belongs to the serine/threonine dehydratase family. DsdA subfamily.</text>
</comment>
<protein>
    <recommendedName>
        <fullName evidence="1">Probable D-serine dehydratase</fullName>
        <ecNumber evidence="1">4.3.1.18</ecNumber>
    </recommendedName>
    <alternativeName>
        <fullName evidence="1">D-serine deaminase</fullName>
        <shortName evidence="1">DSD</shortName>
    </alternativeName>
</protein>
<reference key="1">
    <citation type="journal article" date="2008" name="BMC Genomics">
        <title>The genome of Aeromonas salmonicida subsp. salmonicida A449: insights into the evolution of a fish pathogen.</title>
        <authorList>
            <person name="Reith M.E."/>
            <person name="Singh R.K."/>
            <person name="Curtis B."/>
            <person name="Boyd J.M."/>
            <person name="Bouevitch A."/>
            <person name="Kimball J."/>
            <person name="Munholland J."/>
            <person name="Murphy C."/>
            <person name="Sarty D."/>
            <person name="Williams J."/>
            <person name="Nash J.H."/>
            <person name="Johnson S.C."/>
            <person name="Brown L.L."/>
        </authorList>
    </citation>
    <scope>NUCLEOTIDE SEQUENCE [LARGE SCALE GENOMIC DNA]</scope>
    <source>
        <strain>A449</strain>
    </source>
</reference>
<evidence type="ECO:0000255" key="1">
    <source>
        <dbReference type="HAMAP-Rule" id="MF_01030"/>
    </source>
</evidence>